<sequence>MPRDKQKRGRRAEAKRKRDDVITDPTVLKRQKSSDVCNYPNPSYEQLEIRGDYIPLDEEPVDYTGTPFYGLLDIEEQEYFSHASGLLELNQFETEEEKSIFIERVYEEANGKELKIACSQSCSRLMEKLISASTVSQIKRLFSKFIGHFLNLVQHRFASHCCECLFIHAAQYVTSEMKKKSSKEKENLEEDSTSELQLEDLFLKAISELEGNWGYLLTERFASHTIRLLLLVLAGKPLRNPSTTTVIASRKKENLASKVGTQLDPSISEKRAVPTSFNKALEKMMKDLVAGLDNTYLRALATHPVGNPVLQLLLSVELSHMGKSKAKDPDSLLRRLVPDENLQGDGESAKFLKGLFYDPVGSRLLETIVQDAPGKFFKLFYKILVRERIGSFSRNEIAGHVVVRILERLSKDDLKSAMDMILPEVAPLVERSRLTVIKALIERGIVRGVDLGPLAAALLSAYGDDAVSRINNMLKLQRSNKESDGTTSSSNTSSPEQLHGSLLAQAMLKSTGPLSELVQSSLLAVTTETLISIAQDPVVSHVLQDALTLPTSTPQFRRQITSRFSGKIAELALHSSGSHVVDALWPATKDLLFVKQRFAEELVVHERALRDSFVGRAVWRNWSMDLYKRKRGSWIAIAKGLEDSTEINPNALTHKPKSNIDLARARFAAKANGSKEPS</sequence>
<dbReference type="EMBL" id="KN305533">
    <property type="protein sequence ID" value="EEH20279.1"/>
    <property type="molecule type" value="Genomic_DNA"/>
</dbReference>
<dbReference type="SMR" id="C0S4C4"/>
<dbReference type="VEuPathDB" id="FungiDB:PABG_02538"/>
<dbReference type="HOGENOM" id="CLU_008720_1_1_1"/>
<dbReference type="OrthoDB" id="33620at33183"/>
<dbReference type="GO" id="GO:0030686">
    <property type="term" value="C:90S preribosome"/>
    <property type="evidence" value="ECO:0007669"/>
    <property type="project" value="TreeGrafter"/>
</dbReference>
<dbReference type="GO" id="GO:0005730">
    <property type="term" value="C:nucleolus"/>
    <property type="evidence" value="ECO:0007669"/>
    <property type="project" value="UniProtKB-SubCell"/>
</dbReference>
<dbReference type="GO" id="GO:0030688">
    <property type="term" value="C:preribosome, small subunit precursor"/>
    <property type="evidence" value="ECO:0007669"/>
    <property type="project" value="TreeGrafter"/>
</dbReference>
<dbReference type="GO" id="GO:0003723">
    <property type="term" value="F:RNA binding"/>
    <property type="evidence" value="ECO:0007669"/>
    <property type="project" value="InterPro"/>
</dbReference>
<dbReference type="GO" id="GO:0000480">
    <property type="term" value="P:endonucleolytic cleavage in 5'-ETS of tricistronic rRNA transcript (SSU-rRNA, 5.8S rRNA, LSU-rRNA)"/>
    <property type="evidence" value="ECO:0007669"/>
    <property type="project" value="TreeGrafter"/>
</dbReference>
<dbReference type="GO" id="GO:0000447">
    <property type="term" value="P:endonucleolytic cleavage in ITS1 to separate SSU-rRNA from 5.8S rRNA and LSU-rRNA from tricistronic rRNA transcript (SSU-rRNA, 5.8S rRNA, LSU-rRNA)"/>
    <property type="evidence" value="ECO:0007669"/>
    <property type="project" value="TreeGrafter"/>
</dbReference>
<dbReference type="GO" id="GO:0000472">
    <property type="term" value="P:endonucleolytic cleavage to generate mature 5'-end of SSU-rRNA from (SSU-rRNA, 5.8S rRNA, LSU-rRNA)"/>
    <property type="evidence" value="ECO:0007669"/>
    <property type="project" value="TreeGrafter"/>
</dbReference>
<dbReference type="GO" id="GO:0000056">
    <property type="term" value="P:ribosomal small subunit export from nucleus"/>
    <property type="evidence" value="ECO:0007669"/>
    <property type="project" value="TreeGrafter"/>
</dbReference>
<dbReference type="Gene3D" id="1.25.10.10">
    <property type="entry name" value="Leucine-rich Repeat Variant"/>
    <property type="match status" value="2"/>
</dbReference>
<dbReference type="InterPro" id="IPR011989">
    <property type="entry name" value="ARM-like"/>
</dbReference>
<dbReference type="InterPro" id="IPR016024">
    <property type="entry name" value="ARM-type_fold"/>
</dbReference>
<dbReference type="InterPro" id="IPR040000">
    <property type="entry name" value="NOP9"/>
</dbReference>
<dbReference type="InterPro" id="IPR001313">
    <property type="entry name" value="Pumilio_RNA-bd_rpt"/>
</dbReference>
<dbReference type="PANTHER" id="PTHR13102">
    <property type="entry name" value="NUCLEOLAR PROTEIN 9"/>
    <property type="match status" value="1"/>
</dbReference>
<dbReference type="PANTHER" id="PTHR13102:SF0">
    <property type="entry name" value="NUCLEOLAR PROTEIN 9"/>
    <property type="match status" value="1"/>
</dbReference>
<dbReference type="Pfam" id="PF22493">
    <property type="entry name" value="PUF_NOP9"/>
    <property type="match status" value="1"/>
</dbReference>
<dbReference type="SMART" id="SM00025">
    <property type="entry name" value="Pumilio"/>
    <property type="match status" value="8"/>
</dbReference>
<dbReference type="SUPFAM" id="SSF48371">
    <property type="entry name" value="ARM repeat"/>
    <property type="match status" value="1"/>
</dbReference>
<accession>C0S4C4</accession>
<organism>
    <name type="scientific">Paracoccidioides brasiliensis (strain Pb03)</name>
    <dbReference type="NCBI Taxonomy" id="482561"/>
    <lineage>
        <taxon>Eukaryota</taxon>
        <taxon>Fungi</taxon>
        <taxon>Dikarya</taxon>
        <taxon>Ascomycota</taxon>
        <taxon>Pezizomycotina</taxon>
        <taxon>Eurotiomycetes</taxon>
        <taxon>Eurotiomycetidae</taxon>
        <taxon>Onygenales</taxon>
        <taxon>Ajellomycetaceae</taxon>
        <taxon>Paracoccidioides</taxon>
    </lineage>
</organism>
<comment type="function">
    <text evidence="1">RNA-binding nucleolar protein required for pre-rRNA processing. Involved in production of 18S rRNA and assembly of small ribosomal subunit (By similarity).</text>
</comment>
<comment type="subcellular location">
    <subcellularLocation>
        <location evidence="1">Nucleus</location>
        <location evidence="1">Nucleolus</location>
    </subcellularLocation>
</comment>
<comment type="similarity">
    <text evidence="3">Belongs to the NOP9 family.</text>
</comment>
<keyword id="KW-0539">Nucleus</keyword>
<keyword id="KW-0677">Repeat</keyword>
<keyword id="KW-0690">Ribosome biogenesis</keyword>
<keyword id="KW-0698">rRNA processing</keyword>
<evidence type="ECO:0000250" key="1"/>
<evidence type="ECO:0000256" key="2">
    <source>
        <dbReference type="SAM" id="MobiDB-lite"/>
    </source>
</evidence>
<evidence type="ECO:0000305" key="3"/>
<proteinExistence type="inferred from homology"/>
<gene>
    <name type="primary">NOP9</name>
    <name type="ORF">PABG_02538</name>
</gene>
<feature type="chain" id="PRO_0000407823" description="Nucleolar protein 9">
    <location>
        <begin position="1"/>
        <end position="678"/>
    </location>
</feature>
<feature type="repeat" description="Pumilio 1">
    <location>
        <begin position="108"/>
        <end position="143"/>
    </location>
</feature>
<feature type="repeat" description="Pumilio 2">
    <location>
        <begin position="291"/>
        <end position="334"/>
    </location>
</feature>
<feature type="repeat" description="Pumilio 3">
    <location>
        <begin position="382"/>
        <end position="419"/>
    </location>
</feature>
<feature type="repeat" description="Pumilio 4">
    <location>
        <begin position="524"/>
        <end position="562"/>
    </location>
</feature>
<feature type="repeat" description="Pumilio 5">
    <location>
        <begin position="563"/>
        <end position="600"/>
    </location>
</feature>
<feature type="region of interest" description="Disordered" evidence="2">
    <location>
        <begin position="1"/>
        <end position="24"/>
    </location>
</feature>
<feature type="region of interest" description="Disordered" evidence="2">
    <location>
        <begin position="477"/>
        <end position="496"/>
    </location>
</feature>
<feature type="compositionally biased region" description="Basic residues" evidence="2">
    <location>
        <begin position="1"/>
        <end position="15"/>
    </location>
</feature>
<reference key="1">
    <citation type="journal article" date="2011" name="PLoS Genet.">
        <title>Comparative genomic analysis of human fungal pathogens causing paracoccidioidomycosis.</title>
        <authorList>
            <person name="Desjardins C.A."/>
            <person name="Champion M.D."/>
            <person name="Holder J.W."/>
            <person name="Muszewska A."/>
            <person name="Goldberg J."/>
            <person name="Bailao A.M."/>
            <person name="Brigido M.M."/>
            <person name="Ferreira M.E."/>
            <person name="Garcia A.M."/>
            <person name="Grynberg M."/>
            <person name="Gujja S."/>
            <person name="Heiman D.I."/>
            <person name="Henn M.R."/>
            <person name="Kodira C.D."/>
            <person name="Leon-Narvaez H."/>
            <person name="Longo L.V.G."/>
            <person name="Ma L.-J."/>
            <person name="Malavazi I."/>
            <person name="Matsuo A.L."/>
            <person name="Morais F.V."/>
            <person name="Pereira M."/>
            <person name="Rodriguez-Brito S."/>
            <person name="Sakthikumar S."/>
            <person name="Salem-Izacc S.M."/>
            <person name="Sykes S.M."/>
            <person name="Teixeira M.M."/>
            <person name="Vallejo M.C."/>
            <person name="Walter M.E."/>
            <person name="Yandava C."/>
            <person name="Young S."/>
            <person name="Zeng Q."/>
            <person name="Zucker J."/>
            <person name="Felipe M.S."/>
            <person name="Goldman G.H."/>
            <person name="Haas B.J."/>
            <person name="McEwen J.G."/>
            <person name="Nino-Vega G."/>
            <person name="Puccia R."/>
            <person name="San-Blas G."/>
            <person name="Soares C.M."/>
            <person name="Birren B.W."/>
            <person name="Cuomo C.A."/>
        </authorList>
    </citation>
    <scope>NUCLEOTIDE SEQUENCE [LARGE SCALE GENOMIC DNA]</scope>
    <source>
        <strain>Pb03</strain>
    </source>
</reference>
<protein>
    <recommendedName>
        <fullName>Nucleolar protein 9</fullName>
    </recommendedName>
    <alternativeName>
        <fullName>Pumilio domain-containing protein NOP9</fullName>
    </alternativeName>
</protein>
<name>NOP9_PARBP</name>